<gene>
    <name evidence="1" type="primary">rnc</name>
    <name type="ordered locus">YPO2718</name>
    <name type="ordered locus">y1297</name>
    <name type="ordered locus">YP_2522</name>
</gene>
<keyword id="KW-0963">Cytoplasm</keyword>
<keyword id="KW-0255">Endonuclease</keyword>
<keyword id="KW-0378">Hydrolase</keyword>
<keyword id="KW-0460">Magnesium</keyword>
<keyword id="KW-0479">Metal-binding</keyword>
<keyword id="KW-0507">mRNA processing</keyword>
<keyword id="KW-0540">Nuclease</keyword>
<keyword id="KW-1185">Reference proteome</keyword>
<keyword id="KW-0694">RNA-binding</keyword>
<keyword id="KW-0698">rRNA processing</keyword>
<keyword id="KW-0699">rRNA-binding</keyword>
<keyword id="KW-0819">tRNA processing</keyword>
<dbReference type="EC" id="3.1.26.3" evidence="1"/>
<dbReference type="EMBL" id="AL590842">
    <property type="protein sequence ID" value="CAL21337.1"/>
    <property type="molecule type" value="Genomic_DNA"/>
</dbReference>
<dbReference type="EMBL" id="AE009952">
    <property type="protein sequence ID" value="AAM84871.1"/>
    <property type="molecule type" value="Genomic_DNA"/>
</dbReference>
<dbReference type="EMBL" id="AE017042">
    <property type="protein sequence ID" value="AAS62720.1"/>
    <property type="molecule type" value="Genomic_DNA"/>
</dbReference>
<dbReference type="PIR" id="AF0331">
    <property type="entry name" value="AF0331"/>
</dbReference>
<dbReference type="RefSeq" id="WP_002209679.1">
    <property type="nucleotide sequence ID" value="NZ_WUCM01000006.1"/>
</dbReference>
<dbReference type="RefSeq" id="YP_002347665.1">
    <property type="nucleotide sequence ID" value="NC_003143.1"/>
</dbReference>
<dbReference type="SMR" id="Q8ZD72"/>
<dbReference type="STRING" id="214092.YPO2718"/>
<dbReference type="PaxDb" id="214092-YPO2718"/>
<dbReference type="DNASU" id="1146244"/>
<dbReference type="EnsemblBacteria" id="AAS62720">
    <property type="protein sequence ID" value="AAS62720"/>
    <property type="gene ID" value="YP_2522"/>
</dbReference>
<dbReference type="GeneID" id="57975973"/>
<dbReference type="KEGG" id="ype:YPO2718"/>
<dbReference type="KEGG" id="ypj:CH55_1448"/>
<dbReference type="KEGG" id="ypk:y1297"/>
<dbReference type="KEGG" id="ypl:CH46_2386"/>
<dbReference type="KEGG" id="ypm:YP_2522"/>
<dbReference type="KEGG" id="ypv:BZ15_809"/>
<dbReference type="KEGG" id="ypw:CH59_3603"/>
<dbReference type="PATRIC" id="fig|214092.21.peg.3159"/>
<dbReference type="eggNOG" id="COG0571">
    <property type="taxonomic scope" value="Bacteria"/>
</dbReference>
<dbReference type="HOGENOM" id="CLU_000907_1_1_6"/>
<dbReference type="OMA" id="LTHKSCK"/>
<dbReference type="OrthoDB" id="9805026at2"/>
<dbReference type="Proteomes" id="UP000000815">
    <property type="component" value="Chromosome"/>
</dbReference>
<dbReference type="Proteomes" id="UP000001019">
    <property type="component" value="Chromosome"/>
</dbReference>
<dbReference type="Proteomes" id="UP000002490">
    <property type="component" value="Chromosome"/>
</dbReference>
<dbReference type="GO" id="GO:0005829">
    <property type="term" value="C:cytosol"/>
    <property type="evidence" value="ECO:0000318"/>
    <property type="project" value="GO_Central"/>
</dbReference>
<dbReference type="GO" id="GO:0003725">
    <property type="term" value="F:double-stranded RNA binding"/>
    <property type="evidence" value="ECO:0000318"/>
    <property type="project" value="GO_Central"/>
</dbReference>
<dbReference type="GO" id="GO:0046872">
    <property type="term" value="F:metal ion binding"/>
    <property type="evidence" value="ECO:0007669"/>
    <property type="project" value="UniProtKB-KW"/>
</dbReference>
<dbReference type="GO" id="GO:0004525">
    <property type="term" value="F:ribonuclease III activity"/>
    <property type="evidence" value="ECO:0000318"/>
    <property type="project" value="GO_Central"/>
</dbReference>
<dbReference type="GO" id="GO:0019843">
    <property type="term" value="F:rRNA binding"/>
    <property type="evidence" value="ECO:0007669"/>
    <property type="project" value="UniProtKB-KW"/>
</dbReference>
<dbReference type="GO" id="GO:0006397">
    <property type="term" value="P:mRNA processing"/>
    <property type="evidence" value="ECO:0007669"/>
    <property type="project" value="UniProtKB-UniRule"/>
</dbReference>
<dbReference type="GO" id="GO:0010468">
    <property type="term" value="P:regulation of gene expression"/>
    <property type="evidence" value="ECO:0000318"/>
    <property type="project" value="GO_Central"/>
</dbReference>
<dbReference type="GO" id="GO:0006396">
    <property type="term" value="P:RNA processing"/>
    <property type="evidence" value="ECO:0000318"/>
    <property type="project" value="GO_Central"/>
</dbReference>
<dbReference type="GO" id="GO:0006364">
    <property type="term" value="P:rRNA processing"/>
    <property type="evidence" value="ECO:0007669"/>
    <property type="project" value="UniProtKB-UniRule"/>
</dbReference>
<dbReference type="GO" id="GO:0008033">
    <property type="term" value="P:tRNA processing"/>
    <property type="evidence" value="ECO:0007669"/>
    <property type="project" value="UniProtKB-KW"/>
</dbReference>
<dbReference type="CDD" id="cd10845">
    <property type="entry name" value="DSRM_RNAse_III_family"/>
    <property type="match status" value="1"/>
</dbReference>
<dbReference type="CDD" id="cd00593">
    <property type="entry name" value="RIBOc"/>
    <property type="match status" value="1"/>
</dbReference>
<dbReference type="FunFam" id="1.10.1520.10:FF:000001">
    <property type="entry name" value="Ribonuclease 3"/>
    <property type="match status" value="1"/>
</dbReference>
<dbReference type="FunFam" id="3.30.160.20:FF:000003">
    <property type="entry name" value="Ribonuclease 3"/>
    <property type="match status" value="1"/>
</dbReference>
<dbReference type="Gene3D" id="3.30.160.20">
    <property type="match status" value="1"/>
</dbReference>
<dbReference type="Gene3D" id="1.10.1520.10">
    <property type="entry name" value="Ribonuclease III domain"/>
    <property type="match status" value="1"/>
</dbReference>
<dbReference type="HAMAP" id="MF_00104">
    <property type="entry name" value="RNase_III"/>
    <property type="match status" value="1"/>
</dbReference>
<dbReference type="InterPro" id="IPR014720">
    <property type="entry name" value="dsRBD_dom"/>
</dbReference>
<dbReference type="InterPro" id="IPR011907">
    <property type="entry name" value="RNase_III"/>
</dbReference>
<dbReference type="InterPro" id="IPR000999">
    <property type="entry name" value="RNase_III_dom"/>
</dbReference>
<dbReference type="InterPro" id="IPR036389">
    <property type="entry name" value="RNase_III_sf"/>
</dbReference>
<dbReference type="NCBIfam" id="TIGR02191">
    <property type="entry name" value="RNaseIII"/>
    <property type="match status" value="1"/>
</dbReference>
<dbReference type="PANTHER" id="PTHR11207:SF0">
    <property type="entry name" value="RIBONUCLEASE 3"/>
    <property type="match status" value="1"/>
</dbReference>
<dbReference type="PANTHER" id="PTHR11207">
    <property type="entry name" value="RIBONUCLEASE III"/>
    <property type="match status" value="1"/>
</dbReference>
<dbReference type="Pfam" id="PF00035">
    <property type="entry name" value="dsrm"/>
    <property type="match status" value="1"/>
</dbReference>
<dbReference type="Pfam" id="PF14622">
    <property type="entry name" value="Ribonucleas_3_3"/>
    <property type="match status" value="1"/>
</dbReference>
<dbReference type="SMART" id="SM00358">
    <property type="entry name" value="DSRM"/>
    <property type="match status" value="1"/>
</dbReference>
<dbReference type="SMART" id="SM00535">
    <property type="entry name" value="RIBOc"/>
    <property type="match status" value="1"/>
</dbReference>
<dbReference type="SUPFAM" id="SSF54768">
    <property type="entry name" value="dsRNA-binding domain-like"/>
    <property type="match status" value="1"/>
</dbReference>
<dbReference type="SUPFAM" id="SSF69065">
    <property type="entry name" value="RNase III domain-like"/>
    <property type="match status" value="1"/>
</dbReference>
<dbReference type="PROSITE" id="PS50137">
    <property type="entry name" value="DS_RBD"/>
    <property type="match status" value="1"/>
</dbReference>
<dbReference type="PROSITE" id="PS00517">
    <property type="entry name" value="RNASE_3_1"/>
    <property type="match status" value="1"/>
</dbReference>
<dbReference type="PROSITE" id="PS50142">
    <property type="entry name" value="RNASE_3_2"/>
    <property type="match status" value="1"/>
</dbReference>
<comment type="function">
    <text evidence="1">Digests double-stranded RNA. Involved in the processing of primary rRNA transcript to yield the immediate precursors to the large and small rRNAs (23S and 16S). Processes some mRNAs, and tRNAs when they are encoded in the rRNA operon. Processes pre-crRNA and tracrRNA of type II CRISPR loci if present in the organism.</text>
</comment>
<comment type="catalytic activity">
    <reaction evidence="1">
        <text>Endonucleolytic cleavage to 5'-phosphomonoester.</text>
        <dbReference type="EC" id="3.1.26.3"/>
    </reaction>
</comment>
<comment type="cofactor">
    <cofactor evidence="1">
        <name>Mg(2+)</name>
        <dbReference type="ChEBI" id="CHEBI:18420"/>
    </cofactor>
</comment>
<comment type="subunit">
    <text evidence="1">Homodimer.</text>
</comment>
<comment type="subcellular location">
    <subcellularLocation>
        <location evidence="1">Cytoplasm</location>
    </subcellularLocation>
</comment>
<comment type="similarity">
    <text evidence="1">Belongs to the ribonuclease III family.</text>
</comment>
<organism>
    <name type="scientific">Yersinia pestis</name>
    <dbReference type="NCBI Taxonomy" id="632"/>
    <lineage>
        <taxon>Bacteria</taxon>
        <taxon>Pseudomonadati</taxon>
        <taxon>Pseudomonadota</taxon>
        <taxon>Gammaproteobacteria</taxon>
        <taxon>Enterobacterales</taxon>
        <taxon>Yersiniaceae</taxon>
        <taxon>Yersinia</taxon>
    </lineage>
</organism>
<accession>Q8ZD72</accession>
<accession>Q0WDH3</accession>
<sequence>MNPIVINRLQRKLGYTFQQQELLLQALTHRSASSKHNERLEFLGDSILSFVIANELYRRFPRVDEGDMSRMRATLVRGNTLAEMAREFDLGECLRLGPGELKSGGFRRESILADTVEALIGGVFLDSDIHTIERLILEWYHSRLEEISPGDKQKDPKTRLQEYLQGRHLPLPSYLVVQVRGEAHDQEFTIHCQVSGLNEPVIGTGSSRRKAEQAAAEQALKQLELE</sequence>
<protein>
    <recommendedName>
        <fullName evidence="1">Ribonuclease 3</fullName>
        <ecNumber evidence="1">3.1.26.3</ecNumber>
    </recommendedName>
    <alternativeName>
        <fullName evidence="1">Ribonuclease III</fullName>
        <shortName evidence="1">RNase III</shortName>
    </alternativeName>
</protein>
<name>RNC_YERPE</name>
<evidence type="ECO:0000255" key="1">
    <source>
        <dbReference type="HAMAP-Rule" id="MF_00104"/>
    </source>
</evidence>
<reference key="1">
    <citation type="journal article" date="2001" name="Nature">
        <title>Genome sequence of Yersinia pestis, the causative agent of plague.</title>
        <authorList>
            <person name="Parkhill J."/>
            <person name="Wren B.W."/>
            <person name="Thomson N.R."/>
            <person name="Titball R.W."/>
            <person name="Holden M.T.G."/>
            <person name="Prentice M.B."/>
            <person name="Sebaihia M."/>
            <person name="James K.D."/>
            <person name="Churcher C.M."/>
            <person name="Mungall K.L."/>
            <person name="Baker S."/>
            <person name="Basham D."/>
            <person name="Bentley S.D."/>
            <person name="Brooks K."/>
            <person name="Cerdeno-Tarraga A.-M."/>
            <person name="Chillingworth T."/>
            <person name="Cronin A."/>
            <person name="Davies R.M."/>
            <person name="Davis P."/>
            <person name="Dougan G."/>
            <person name="Feltwell T."/>
            <person name="Hamlin N."/>
            <person name="Holroyd S."/>
            <person name="Jagels K."/>
            <person name="Karlyshev A.V."/>
            <person name="Leather S."/>
            <person name="Moule S."/>
            <person name="Oyston P.C.F."/>
            <person name="Quail M.A."/>
            <person name="Rutherford K.M."/>
            <person name="Simmonds M."/>
            <person name="Skelton J."/>
            <person name="Stevens K."/>
            <person name="Whitehead S."/>
            <person name="Barrell B.G."/>
        </authorList>
    </citation>
    <scope>NUCLEOTIDE SEQUENCE [LARGE SCALE GENOMIC DNA]</scope>
    <source>
        <strain>CO-92 / Biovar Orientalis</strain>
    </source>
</reference>
<reference key="2">
    <citation type="journal article" date="2002" name="J. Bacteriol.">
        <title>Genome sequence of Yersinia pestis KIM.</title>
        <authorList>
            <person name="Deng W."/>
            <person name="Burland V."/>
            <person name="Plunkett G. III"/>
            <person name="Boutin A."/>
            <person name="Mayhew G.F."/>
            <person name="Liss P."/>
            <person name="Perna N.T."/>
            <person name="Rose D.J."/>
            <person name="Mau B."/>
            <person name="Zhou S."/>
            <person name="Schwartz D.C."/>
            <person name="Fetherston J.D."/>
            <person name="Lindler L.E."/>
            <person name="Brubaker R.R."/>
            <person name="Plano G.V."/>
            <person name="Straley S.C."/>
            <person name="McDonough K.A."/>
            <person name="Nilles M.L."/>
            <person name="Matson J.S."/>
            <person name="Blattner F.R."/>
            <person name="Perry R.D."/>
        </authorList>
    </citation>
    <scope>NUCLEOTIDE SEQUENCE [LARGE SCALE GENOMIC DNA]</scope>
    <source>
        <strain>KIM10+ / Biovar Mediaevalis</strain>
    </source>
</reference>
<reference key="3">
    <citation type="journal article" date="2004" name="DNA Res.">
        <title>Complete genome sequence of Yersinia pestis strain 91001, an isolate avirulent to humans.</title>
        <authorList>
            <person name="Song Y."/>
            <person name="Tong Z."/>
            <person name="Wang J."/>
            <person name="Wang L."/>
            <person name="Guo Z."/>
            <person name="Han Y."/>
            <person name="Zhang J."/>
            <person name="Pei D."/>
            <person name="Zhou D."/>
            <person name="Qin H."/>
            <person name="Pang X."/>
            <person name="Han Y."/>
            <person name="Zhai J."/>
            <person name="Li M."/>
            <person name="Cui B."/>
            <person name="Qi Z."/>
            <person name="Jin L."/>
            <person name="Dai R."/>
            <person name="Chen F."/>
            <person name="Li S."/>
            <person name="Ye C."/>
            <person name="Du Z."/>
            <person name="Lin W."/>
            <person name="Wang J."/>
            <person name="Yu J."/>
            <person name="Yang H."/>
            <person name="Wang J."/>
            <person name="Huang P."/>
            <person name="Yang R."/>
        </authorList>
    </citation>
    <scope>NUCLEOTIDE SEQUENCE [LARGE SCALE GENOMIC DNA]</scope>
    <source>
        <strain>91001 / Biovar Mediaevalis</strain>
    </source>
</reference>
<feature type="chain" id="PRO_0000180461" description="Ribonuclease 3">
    <location>
        <begin position="1"/>
        <end position="226"/>
    </location>
</feature>
<feature type="domain" description="RNase III" evidence="1">
    <location>
        <begin position="6"/>
        <end position="128"/>
    </location>
</feature>
<feature type="domain" description="DRBM" evidence="1">
    <location>
        <begin position="155"/>
        <end position="225"/>
    </location>
</feature>
<feature type="active site" evidence="1">
    <location>
        <position position="45"/>
    </location>
</feature>
<feature type="active site" evidence="1">
    <location>
        <position position="117"/>
    </location>
</feature>
<feature type="binding site" evidence="1">
    <location>
        <position position="41"/>
    </location>
    <ligand>
        <name>Mg(2+)</name>
        <dbReference type="ChEBI" id="CHEBI:18420"/>
    </ligand>
</feature>
<feature type="binding site" evidence="1">
    <location>
        <position position="114"/>
    </location>
    <ligand>
        <name>Mg(2+)</name>
        <dbReference type="ChEBI" id="CHEBI:18420"/>
    </ligand>
</feature>
<feature type="binding site" evidence="1">
    <location>
        <position position="117"/>
    </location>
    <ligand>
        <name>Mg(2+)</name>
        <dbReference type="ChEBI" id="CHEBI:18420"/>
    </ligand>
</feature>
<proteinExistence type="inferred from homology"/>